<sequence>MAPGEKIKAKIKKNLPVTGPQAPTIKELMRWYCLNTNTHGCRRIVVSRGRLRRLLWIGFTLTAVALILWQCALLVFSFYTVSVSIKVHFRKLDFPAVTICNINPYKYSTVRHLLADLEQETREALKSLYGFPESRKRREAESWSSISEGKQPRFSHRIPLLIFDQDEKGKARDFFTGRKRKVGGSIIHKASNVMHIESKQVVGFQLNFTLFHHPMHGNCYTFNNRENETILSTSMGGSEYGLQVILYINEEEYNPFLVSSTGAKVIIHRQDEYPFVEDVGTEIETAMVTSIGMHLTESFKLSEPYSQCTEDGSDVPIRNIYNAAYSLQICLHSCFQTKMVEKCGCAQYSQPLPPAANYCNYQQHPNWMYCYYQLHRAFVQEELGCQSVCKEACSFKEWTLTTSLAQWPSVVSEKWLLPVLTWDQGRQVNKKLNKTDLAKLLIFYKDLNQRSIMESPANSIEMLLSNFGGQLGLWMSCSVVCVIEIIEVFFIDFFSIIARRQWQKAKEWWARKQAPPCPEAPRSPQGQDNPALDIDDDLPTFNSALHLPPALGTQVPGTPPPKYNTLRLERAFSNQLTDTQMLDEL</sequence>
<keyword id="KW-1003">Cell membrane</keyword>
<keyword id="KW-1015">Disulfide bond</keyword>
<keyword id="KW-0325">Glycoprotein</keyword>
<keyword id="KW-0407">Ion channel</keyword>
<keyword id="KW-0406">Ion transport</keyword>
<keyword id="KW-0472">Membrane</keyword>
<keyword id="KW-0597">Phosphoprotein</keyword>
<keyword id="KW-1185">Reference proteome</keyword>
<keyword id="KW-0915">Sodium</keyword>
<keyword id="KW-0894">Sodium channel</keyword>
<keyword id="KW-0739">Sodium transport</keyword>
<keyword id="KW-0812">Transmembrane</keyword>
<keyword id="KW-1133">Transmembrane helix</keyword>
<keyword id="KW-0813">Transport</keyword>
<keyword id="KW-0832">Ubl conjugation</keyword>
<dbReference type="EMBL" id="AACZ03104215">
    <property type="status" value="NOT_ANNOTATED_CDS"/>
    <property type="molecule type" value="Genomic_DNA"/>
</dbReference>
<dbReference type="EMBL" id="AACZ03104216">
    <property type="status" value="NOT_ANNOTATED_CDS"/>
    <property type="molecule type" value="Genomic_DNA"/>
</dbReference>
<dbReference type="SMR" id="H2QAR5"/>
<dbReference type="STRING" id="9598.ENSPTRP00000013456"/>
<dbReference type="GlyCosmos" id="H2QAR5">
    <property type="glycosylation" value="2 sites, No reported glycans"/>
</dbReference>
<dbReference type="PaxDb" id="9598-ENSPTRP00000013456"/>
<dbReference type="eggNOG" id="KOG4294">
    <property type="taxonomic scope" value="Eukaryota"/>
</dbReference>
<dbReference type="HOGENOM" id="CLU_020415_0_0_1"/>
<dbReference type="InParanoid" id="H2QAR5"/>
<dbReference type="TreeFam" id="TF330663"/>
<dbReference type="Proteomes" id="UP000002277">
    <property type="component" value="Unplaced"/>
</dbReference>
<dbReference type="GO" id="GO:0016324">
    <property type="term" value="C:apical plasma membrane"/>
    <property type="evidence" value="ECO:0000250"/>
    <property type="project" value="UniProtKB"/>
</dbReference>
<dbReference type="GO" id="GO:0005886">
    <property type="term" value="C:plasma membrane"/>
    <property type="evidence" value="ECO:0000318"/>
    <property type="project" value="GO_Central"/>
</dbReference>
<dbReference type="GO" id="GO:0034706">
    <property type="term" value="C:sodium channel complex"/>
    <property type="evidence" value="ECO:0000318"/>
    <property type="project" value="GO_Central"/>
</dbReference>
<dbReference type="GO" id="GO:0015280">
    <property type="term" value="F:ligand-gated sodium channel activity"/>
    <property type="evidence" value="ECO:0000318"/>
    <property type="project" value="GO_Central"/>
</dbReference>
<dbReference type="GO" id="GO:0035725">
    <property type="term" value="P:sodium ion transmembrane transport"/>
    <property type="evidence" value="ECO:0000250"/>
    <property type="project" value="UniProtKB"/>
</dbReference>
<dbReference type="FunFam" id="1.10.287.770:FF:000005">
    <property type="entry name" value="Amiloride-sensitive sodium channel subunit gamma"/>
    <property type="match status" value="1"/>
</dbReference>
<dbReference type="FunFam" id="2.60.470.10:FF:000005">
    <property type="entry name" value="Amiloride-sensitive sodium channel subunit gamma"/>
    <property type="match status" value="1"/>
</dbReference>
<dbReference type="Gene3D" id="2.60.470.10">
    <property type="entry name" value="Acid-sensing ion channels like domains"/>
    <property type="match status" value="1"/>
</dbReference>
<dbReference type="Gene3D" id="1.10.287.770">
    <property type="entry name" value="YojJ-like"/>
    <property type="match status" value="1"/>
</dbReference>
<dbReference type="InterPro" id="IPR001873">
    <property type="entry name" value="ENaC"/>
</dbReference>
<dbReference type="InterPro" id="IPR004724">
    <property type="entry name" value="ENaC_chordates"/>
</dbReference>
<dbReference type="InterPro" id="IPR020903">
    <property type="entry name" value="ENaC_CS"/>
</dbReference>
<dbReference type="NCBIfam" id="TIGR00859">
    <property type="entry name" value="ENaC"/>
    <property type="match status" value="1"/>
</dbReference>
<dbReference type="PANTHER" id="PTHR11690:SF19">
    <property type="entry name" value="AMILORIDE-SENSITIVE SODIUM CHANNEL SUBUNIT GAMMA"/>
    <property type="match status" value="1"/>
</dbReference>
<dbReference type="PANTHER" id="PTHR11690">
    <property type="entry name" value="AMILORIDE-SENSITIVE SODIUM CHANNEL-RELATED"/>
    <property type="match status" value="1"/>
</dbReference>
<dbReference type="Pfam" id="PF00858">
    <property type="entry name" value="ASC"/>
    <property type="match status" value="1"/>
</dbReference>
<dbReference type="PRINTS" id="PR01078">
    <property type="entry name" value="AMINACHANNEL"/>
</dbReference>
<dbReference type="PROSITE" id="PS01206">
    <property type="entry name" value="ASC"/>
    <property type="match status" value="1"/>
</dbReference>
<comment type="function">
    <text evidence="2">This is one of the three pore-forming subunits of the heterotrimeric epithelial sodium channel (ENaC), a critical regulator of sodium balance and fluid homeostasis. ENaC operates in epithelial tissues, where it mediates the electrodiffusion of sodium ions from extracellular fluid through the apical membrane of cells, with water following osmotically. It plays a key role in maintaining sodium homeostasis through electrogenic sodium reabsorption in the kidneys. Additionally, ENaC is essential for airway surface liquid homeostasis, which is crucial for proper mucus clearance.</text>
</comment>
<comment type="catalytic activity">
    <reaction evidence="2">
        <text>Na(+)(in) = Na(+)(out)</text>
        <dbReference type="Rhea" id="RHEA:34963"/>
        <dbReference type="ChEBI" id="CHEBI:29101"/>
    </reaction>
</comment>
<comment type="activity regulation">
    <text evidence="2">Originally identified and characterized by its inhibition by the diuretic drug amiloride.</text>
</comment>
<comment type="subunit">
    <text evidence="2">Component of the heterotrimeric epithelial sodium channel (ENaC) composed of an alpha/SCNN1A, a beta/SCNN1B and a gamma/SCNN1G subunit. An additional delta/SCNN1D subunit can replace the alpha/SCNN1A subunit to form an alternative channel with specific properties. Interacts with WWP1 (via WW domains). Interacts with WWP2 (via WW domains); inhibits the channel. Interacts with the full-length immature form of PCSK9 (pro-PCSK9); inhibits ENaC by promoting its proteasomal degradation. Interacts with BPIFA1; the interaction is indirect via SCNN1B and inhibits the proteolytic maturation of SCNN1A and SCNN1G and the activation of ENaC.</text>
</comment>
<comment type="subcellular location">
    <subcellularLocation>
        <location evidence="2">Apical cell membrane</location>
        <topology evidence="2">Multi-pass membrane protein</topology>
    </subcellularLocation>
</comment>
<comment type="PTM">
    <text evidence="1">Phosphorylated on serine and threonine residues. Aldosterone and insulin increase the basal level of phosphorylation.</text>
</comment>
<comment type="PTM">
    <text evidence="2">Ubiquitinated. Can be ubiquitinated at multiple sites and undergo monoubiquitination and polyubiquitination. Ubiquitination by NEDD4 or NEDD4L inhibits the ENaC channel through endocytosis, intracellular retention and degradation of its individual subunits.</text>
</comment>
<comment type="PTM">
    <text evidence="2">ENaC is activated through the proteolytic maturation of its subunits. Furin cleaves the SCNN1G subunit first, followed by cleavage by prostasin (PRSS8), which results in a stepwise increase in the open probability of the channel due to the release of an inhibitory tract. BPIFA1, which is recruited by the SCNN1B subunit, prevents the proteolytic activation of ENaC.</text>
</comment>
<comment type="PTM">
    <text evidence="3">N-glycosylated. N-linked glycans are processed to complex type during ENaC complex assembly and transport to the plasma membrane.</text>
</comment>
<comment type="similarity">
    <text evidence="6">Belongs to the amiloride-sensitive sodium channel (TC 1.A.6) family. SCNN1G subfamily.</text>
</comment>
<reference key="1">
    <citation type="journal article" date="2005" name="Nature">
        <title>Initial sequence of the chimpanzee genome and comparison with the human genome.</title>
        <authorList>
            <consortium name="Chimpanzee sequencing and analysis consortium"/>
        </authorList>
    </citation>
    <scope>NUCLEOTIDE SEQUENCE [LARGE SCALE GENOMIC DNA]</scope>
</reference>
<evidence type="ECO:0000250" key="1">
    <source>
        <dbReference type="UniProtKB" id="P37091"/>
    </source>
</evidence>
<evidence type="ECO:0000250" key="2">
    <source>
        <dbReference type="UniProtKB" id="P51170"/>
    </source>
</evidence>
<evidence type="ECO:0000250" key="3">
    <source>
        <dbReference type="UniProtKB" id="Q9WU39"/>
    </source>
</evidence>
<evidence type="ECO:0000255" key="4"/>
<evidence type="ECO:0000256" key="5">
    <source>
        <dbReference type="SAM" id="MobiDB-lite"/>
    </source>
</evidence>
<evidence type="ECO:0000305" key="6"/>
<name>SCNNG_PANTR</name>
<accession>H2QAR5</accession>
<organism>
    <name type="scientific">Pan troglodytes</name>
    <name type="common">Chimpanzee</name>
    <dbReference type="NCBI Taxonomy" id="9598"/>
    <lineage>
        <taxon>Eukaryota</taxon>
        <taxon>Metazoa</taxon>
        <taxon>Chordata</taxon>
        <taxon>Craniata</taxon>
        <taxon>Vertebrata</taxon>
        <taxon>Euteleostomi</taxon>
        <taxon>Mammalia</taxon>
        <taxon>Eutheria</taxon>
        <taxon>Euarchontoglires</taxon>
        <taxon>Primates</taxon>
        <taxon>Haplorrhini</taxon>
        <taxon>Catarrhini</taxon>
        <taxon>Hominidae</taxon>
        <taxon>Pan</taxon>
    </lineage>
</organism>
<feature type="chain" id="PRO_0000432865" description="Epithelial sodium channel subunit gamma">
    <location>
        <begin position="1"/>
        <end position="585"/>
    </location>
</feature>
<feature type="topological domain" description="Cytoplasmic" evidence="2">
    <location>
        <begin position="1"/>
        <end position="55"/>
    </location>
</feature>
<feature type="transmembrane region" description="Helical; Name=1" evidence="4">
    <location>
        <begin position="56"/>
        <end position="76"/>
    </location>
</feature>
<feature type="topological domain" description="Extracellular" evidence="2">
    <location>
        <begin position="77"/>
        <end position="477"/>
    </location>
</feature>
<feature type="transmembrane region" description="Helical; Name=2" evidence="4">
    <location>
        <begin position="478"/>
        <end position="498"/>
    </location>
</feature>
<feature type="topological domain" description="Cytoplasmic" evidence="2">
    <location>
        <begin position="499"/>
        <end position="585"/>
    </location>
</feature>
<feature type="region of interest" description="Disordered" evidence="5">
    <location>
        <begin position="513"/>
        <end position="534"/>
    </location>
</feature>
<feature type="short sequence motif" description="PY motif; recruits WW domain-containing proteins and is thereby required for ubiquitination and inhibition of the channel by NEDD4 and NEDD4L" evidence="2">
    <location>
        <begin position="559"/>
        <end position="563"/>
    </location>
</feature>
<feature type="site" description="Cleavage; by furin" evidence="3">
    <location>
        <begin position="138"/>
        <end position="139"/>
    </location>
</feature>
<feature type="site" description="Cleavage; by PRSS8" evidence="3">
    <location>
        <begin position="181"/>
        <end position="182"/>
    </location>
</feature>
<feature type="glycosylation site" description="N-linked (GlcNAc...) asparagine" evidence="4">
    <location>
        <position position="207"/>
    </location>
</feature>
<feature type="glycosylation site" description="N-linked (GlcNAc...) asparagine" evidence="4">
    <location>
        <position position="433"/>
    </location>
</feature>
<feature type="disulfide bond" evidence="2">
    <location>
        <begin position="100"/>
        <end position="219"/>
    </location>
</feature>
<feature type="disulfide bond" evidence="2">
    <location>
        <begin position="308"/>
        <end position="393"/>
    </location>
</feature>
<feature type="disulfide bond" evidence="2">
    <location>
        <begin position="330"/>
        <end position="389"/>
    </location>
</feature>
<feature type="disulfide bond" evidence="2">
    <location>
        <begin position="334"/>
        <end position="385"/>
    </location>
</feature>
<feature type="disulfide bond" evidence="2">
    <location>
        <begin position="343"/>
        <end position="370"/>
    </location>
</feature>
<feature type="disulfide bond" evidence="2">
    <location>
        <begin position="345"/>
        <end position="359"/>
    </location>
</feature>
<gene>
    <name evidence="2" type="primary">SCNN1G</name>
</gene>
<protein>
    <recommendedName>
        <fullName evidence="2">Epithelial sodium channel subunit gamma</fullName>
    </recommendedName>
    <alternativeName>
        <fullName evidence="2">Amiloride-sensitive sodium channel subunit gamma</fullName>
    </alternativeName>
</protein>
<proteinExistence type="inferred from homology"/>